<protein>
    <recommendedName>
        <fullName evidence="5">Phospholipase A2</fullName>
        <shortName evidence="5">Lmr-PLA2</shortName>
        <ecNumber evidence="4">3.1.1.4</ecNumber>
    </recommendedName>
    <alternativeName>
        <fullName evidence="2">Phosphatidylcholine 2-acylhydrolase</fullName>
    </alternativeName>
</protein>
<feature type="chain" id="PRO_0000419335" description="Phospholipase A2">
    <location>
        <begin position="1"/>
        <end position="60" status="greater than"/>
    </location>
</feature>
<feature type="active site" evidence="3">
    <location>
        <position position="47"/>
    </location>
</feature>
<feature type="binding site" evidence="2">
    <location>
        <position position="27"/>
    </location>
    <ligand>
        <name>Ca(2+)</name>
        <dbReference type="ChEBI" id="CHEBI:29108"/>
    </ligand>
</feature>
<feature type="binding site" evidence="2">
    <location>
        <position position="29"/>
    </location>
    <ligand>
        <name>Ca(2+)</name>
        <dbReference type="ChEBI" id="CHEBI:29108"/>
    </ligand>
</feature>
<feature type="binding site" evidence="1">
    <location>
        <position position="31"/>
    </location>
    <ligand>
        <name>Ca(2+)</name>
        <dbReference type="ChEBI" id="CHEBI:29108"/>
    </ligand>
</feature>
<feature type="binding site" evidence="2">
    <location>
        <position position="48"/>
    </location>
    <ligand>
        <name>Ca(2+)</name>
        <dbReference type="ChEBI" id="CHEBI:29108"/>
    </ligand>
</feature>
<feature type="disulfide bond" evidence="2">
    <location>
        <begin position="28"/>
        <end position="44"/>
    </location>
</feature>
<feature type="non-terminal residue" evidence="5">
    <location>
        <position position="60"/>
    </location>
</feature>
<evidence type="ECO:0000250" key="1">
    <source>
        <dbReference type="UniProtKB" id="P14418"/>
    </source>
</evidence>
<evidence type="ECO:0000250" key="2">
    <source>
        <dbReference type="UniProtKB" id="P20249"/>
    </source>
</evidence>
<evidence type="ECO:0000255" key="3">
    <source>
        <dbReference type="PROSITE-ProRule" id="PRU10035"/>
    </source>
</evidence>
<evidence type="ECO:0000269" key="4">
    <source>
    </source>
</evidence>
<evidence type="ECO:0000303" key="5">
    <source>
    </source>
</evidence>
<evidence type="ECO:0000305" key="6"/>
<evidence type="ECO:0000305" key="7">
    <source>
    </source>
</evidence>
<comment type="function">
    <text evidence="4">Snake venom phospholipase A2 (PLA2) that displays mild but significant inhibition of mouse platelet aggregation induced by ADP and collagen (PubMed:26145564). In vivo, induces edema in the foot pads and gastrocnemius muscles of mice but shows no myonecrotic or myotoxic activity (PubMed:26145564). PA2 catalyzes the calcium-dependent hydrolysis of the 2-acyl groups in 3-sn-phosphoglycerides (PubMed:26145564).</text>
</comment>
<comment type="catalytic activity">
    <reaction evidence="4">
        <text>a 1,2-diacyl-sn-glycero-3-phosphocholine + H2O = a 1-acyl-sn-glycero-3-phosphocholine + a fatty acid + H(+)</text>
        <dbReference type="Rhea" id="RHEA:15801"/>
        <dbReference type="ChEBI" id="CHEBI:15377"/>
        <dbReference type="ChEBI" id="CHEBI:15378"/>
        <dbReference type="ChEBI" id="CHEBI:28868"/>
        <dbReference type="ChEBI" id="CHEBI:57643"/>
        <dbReference type="ChEBI" id="CHEBI:58168"/>
        <dbReference type="EC" id="3.1.1.4"/>
    </reaction>
</comment>
<comment type="cofactor">
    <cofactor evidence="2">
        <name>Ca(2+)</name>
        <dbReference type="ChEBI" id="CHEBI:29108"/>
    </cofactor>
    <text evidence="2">Binds 1 Ca(2+) ion per subunit.</text>
</comment>
<comment type="biophysicochemical properties">
    <kinetics>
        <KM evidence="4">0.404 mM for 4-nitro-3-(octanoyloxy) benzoic acid</KM>
    </kinetics>
</comment>
<comment type="subcellular location">
    <subcellularLocation>
        <location evidence="4">Secreted</location>
    </subcellularLocation>
</comment>
<comment type="tissue specificity">
    <text evidence="7">Expressed by the venom gland.</text>
</comment>
<comment type="mass spectrometry" mass="13975.18" method="MALDI" evidence="4"/>
<comment type="similarity">
    <text evidence="6">Belongs to the phospholipase A2 family. Group II subfamily.</text>
</comment>
<sequence length="60" mass="6740">HLLQFGDLINKIARRNGILYYSFYGCYCGLGGRGRPQDATDRCCFVHDCCYGKVTGCDPK</sequence>
<dbReference type="EC" id="3.1.1.4" evidence="4"/>
<dbReference type="SMR" id="B3EWP6"/>
<dbReference type="GO" id="GO:0005576">
    <property type="term" value="C:extracellular region"/>
    <property type="evidence" value="ECO:0000314"/>
    <property type="project" value="UniProtKB"/>
</dbReference>
<dbReference type="GO" id="GO:0005509">
    <property type="term" value="F:calcium ion binding"/>
    <property type="evidence" value="ECO:0007669"/>
    <property type="project" value="InterPro"/>
</dbReference>
<dbReference type="GO" id="GO:0047498">
    <property type="term" value="F:calcium-dependent phospholipase A2 activity"/>
    <property type="evidence" value="ECO:0007669"/>
    <property type="project" value="TreeGrafter"/>
</dbReference>
<dbReference type="GO" id="GO:0004623">
    <property type="term" value="F:phospholipase A2 activity"/>
    <property type="evidence" value="ECO:0000314"/>
    <property type="project" value="UniProtKB"/>
</dbReference>
<dbReference type="GO" id="GO:0005543">
    <property type="term" value="F:phospholipid binding"/>
    <property type="evidence" value="ECO:0007669"/>
    <property type="project" value="TreeGrafter"/>
</dbReference>
<dbReference type="GO" id="GO:0050482">
    <property type="term" value="P:arachidonate secretion"/>
    <property type="evidence" value="ECO:0007669"/>
    <property type="project" value="InterPro"/>
</dbReference>
<dbReference type="GO" id="GO:0031640">
    <property type="term" value="P:killing of cells of another organism"/>
    <property type="evidence" value="ECO:0007669"/>
    <property type="project" value="UniProtKB-KW"/>
</dbReference>
<dbReference type="GO" id="GO:0016042">
    <property type="term" value="P:lipid catabolic process"/>
    <property type="evidence" value="ECO:0007669"/>
    <property type="project" value="UniProtKB-KW"/>
</dbReference>
<dbReference type="GO" id="GO:0042130">
    <property type="term" value="P:negative regulation of T cell proliferation"/>
    <property type="evidence" value="ECO:0007669"/>
    <property type="project" value="TreeGrafter"/>
</dbReference>
<dbReference type="GO" id="GO:0006644">
    <property type="term" value="P:phospholipid metabolic process"/>
    <property type="evidence" value="ECO:0007669"/>
    <property type="project" value="InterPro"/>
</dbReference>
<dbReference type="GO" id="GO:0044398">
    <property type="term" value="P:venom-mediated edema in another organism"/>
    <property type="evidence" value="ECO:0000314"/>
    <property type="project" value="UniProtKB"/>
</dbReference>
<dbReference type="GO" id="GO:0044478">
    <property type="term" value="P:venom-mediated platelet aggregation"/>
    <property type="evidence" value="ECO:0000314"/>
    <property type="project" value="UniProtKB"/>
</dbReference>
<dbReference type="FunFam" id="1.20.90.10:FF:000022">
    <property type="match status" value="1"/>
</dbReference>
<dbReference type="Gene3D" id="1.20.90.10">
    <property type="entry name" value="Phospholipase A2 domain"/>
    <property type="match status" value="1"/>
</dbReference>
<dbReference type="InterPro" id="IPR001211">
    <property type="entry name" value="PLipase_A2"/>
</dbReference>
<dbReference type="InterPro" id="IPR016090">
    <property type="entry name" value="PLipase_A2_dom"/>
</dbReference>
<dbReference type="InterPro" id="IPR036444">
    <property type="entry name" value="PLipase_A2_dom_sf"/>
</dbReference>
<dbReference type="InterPro" id="IPR033113">
    <property type="entry name" value="PLipase_A2_His_AS"/>
</dbReference>
<dbReference type="PANTHER" id="PTHR11716">
    <property type="entry name" value="PHOSPHOLIPASE A2 FAMILY MEMBER"/>
    <property type="match status" value="1"/>
</dbReference>
<dbReference type="PANTHER" id="PTHR11716:SF9">
    <property type="entry name" value="PHOSPHOLIPASE A2, MEMBRANE ASSOCIATED"/>
    <property type="match status" value="1"/>
</dbReference>
<dbReference type="Pfam" id="PF00068">
    <property type="entry name" value="Phospholip_A2_1"/>
    <property type="match status" value="1"/>
</dbReference>
<dbReference type="PRINTS" id="PR00389">
    <property type="entry name" value="PHPHLIPASEA2"/>
</dbReference>
<dbReference type="SMART" id="SM00085">
    <property type="entry name" value="PA2c"/>
    <property type="match status" value="1"/>
</dbReference>
<dbReference type="SUPFAM" id="SSF48619">
    <property type="entry name" value="Phospholipase A2, PLA2"/>
    <property type="match status" value="1"/>
</dbReference>
<dbReference type="PROSITE" id="PS00118">
    <property type="entry name" value="PA2_HIS"/>
    <property type="match status" value="1"/>
</dbReference>
<accession>B3EWP6</accession>
<organism>
    <name type="scientific">Lachesis muta rhombeata</name>
    <name type="common">Bushmaster</name>
    <dbReference type="NCBI Taxonomy" id="60219"/>
    <lineage>
        <taxon>Eukaryota</taxon>
        <taxon>Metazoa</taxon>
        <taxon>Chordata</taxon>
        <taxon>Craniata</taxon>
        <taxon>Vertebrata</taxon>
        <taxon>Euteleostomi</taxon>
        <taxon>Lepidosauria</taxon>
        <taxon>Squamata</taxon>
        <taxon>Bifurcata</taxon>
        <taxon>Unidentata</taxon>
        <taxon>Episquamata</taxon>
        <taxon>Toxicofera</taxon>
        <taxon>Serpentes</taxon>
        <taxon>Colubroidea</taxon>
        <taxon>Viperidae</taxon>
        <taxon>Crotalinae</taxon>
        <taxon>Lachesis</taxon>
    </lineage>
</organism>
<name>PA2_LACMR</name>
<proteinExistence type="evidence at protein level"/>
<reference key="1">
    <citation type="journal article" date="2015" name="Protein Pept. Lett.">
        <title>A New Phospholipase A(2) from Lachesis muta rhombeata: Purification, Biochemical and Comparative Characterization with Crotoxin B.</title>
        <authorList>
            <person name="Cordeiro F.A."/>
            <person name="Perini T.G."/>
            <person name="Bregge-Silva C."/>
            <person name="Cremonez C.M."/>
            <person name="Rodrigues R.S."/>
            <person name="Boldrini-Franca J."/>
            <person name="Bordon K."/>
            <person name="De Souza D.L."/>
            <person name="Ache D.C."/>
            <person name="de M Rodrigues V."/>
            <person name="Dos Santos W.F."/>
            <person name="Rosa J.C."/>
            <person name="Arantesa E.C."/>
        </authorList>
    </citation>
    <scope>PROTEIN SEQUENCE</scope>
    <scope>FUNCTION</scope>
    <scope>CATALYTIC ACTIVITY</scope>
    <scope>SUBCELLULAR LOCATION</scope>
    <scope>BIOPHYSICOCHEMICAL PROPERTIES</scope>
    <scope>MASS SPECTROMETRY</scope>
    <source>
        <tissue>Venom</tissue>
    </source>
</reference>
<keyword id="KW-0106">Calcium</keyword>
<keyword id="KW-0204">Cytolysis</keyword>
<keyword id="KW-0903">Direct protein sequencing</keyword>
<keyword id="KW-1015">Disulfide bond</keyword>
<keyword id="KW-0354">Hemolysis</keyword>
<keyword id="KW-0378">Hydrolase</keyword>
<keyword id="KW-0442">Lipid degradation</keyword>
<keyword id="KW-0443">Lipid metabolism</keyword>
<keyword id="KW-0479">Metal-binding</keyword>
<keyword id="KW-0964">Secreted</keyword>